<dbReference type="EC" id="2.8.4.3" evidence="1"/>
<dbReference type="EMBL" id="CP000826">
    <property type="protein sequence ID" value="ABV40324.1"/>
    <property type="molecule type" value="Genomic_DNA"/>
</dbReference>
<dbReference type="SMR" id="A8GB34"/>
<dbReference type="STRING" id="399741.Spro_1220"/>
<dbReference type="KEGG" id="spe:Spro_1220"/>
<dbReference type="eggNOG" id="COG0621">
    <property type="taxonomic scope" value="Bacteria"/>
</dbReference>
<dbReference type="HOGENOM" id="CLU_018697_2_0_6"/>
<dbReference type="OrthoDB" id="9805215at2"/>
<dbReference type="GO" id="GO:0005829">
    <property type="term" value="C:cytosol"/>
    <property type="evidence" value="ECO:0007669"/>
    <property type="project" value="TreeGrafter"/>
</dbReference>
<dbReference type="GO" id="GO:0051539">
    <property type="term" value="F:4 iron, 4 sulfur cluster binding"/>
    <property type="evidence" value="ECO:0007669"/>
    <property type="project" value="UniProtKB-UniRule"/>
</dbReference>
<dbReference type="GO" id="GO:0046872">
    <property type="term" value="F:metal ion binding"/>
    <property type="evidence" value="ECO:0007669"/>
    <property type="project" value="UniProtKB-KW"/>
</dbReference>
<dbReference type="GO" id="GO:0035597">
    <property type="term" value="F:N6-isopentenyladenosine methylthiotransferase activity"/>
    <property type="evidence" value="ECO:0007669"/>
    <property type="project" value="TreeGrafter"/>
</dbReference>
<dbReference type="CDD" id="cd01335">
    <property type="entry name" value="Radical_SAM"/>
    <property type="match status" value="1"/>
</dbReference>
<dbReference type="FunFam" id="3.40.50.12160:FF:000001">
    <property type="entry name" value="tRNA-2-methylthio-N(6)-dimethylallyladenosine synthase"/>
    <property type="match status" value="1"/>
</dbReference>
<dbReference type="FunFam" id="3.80.30.20:FF:000001">
    <property type="entry name" value="tRNA-2-methylthio-N(6)-dimethylallyladenosine synthase 2"/>
    <property type="match status" value="1"/>
</dbReference>
<dbReference type="Gene3D" id="3.40.50.12160">
    <property type="entry name" value="Methylthiotransferase, N-terminal domain"/>
    <property type="match status" value="1"/>
</dbReference>
<dbReference type="Gene3D" id="3.80.30.20">
    <property type="entry name" value="tm_1862 like domain"/>
    <property type="match status" value="1"/>
</dbReference>
<dbReference type="HAMAP" id="MF_01864">
    <property type="entry name" value="tRNA_metthiotr_MiaB"/>
    <property type="match status" value="1"/>
</dbReference>
<dbReference type="InterPro" id="IPR006638">
    <property type="entry name" value="Elp3/MiaA/NifB-like_rSAM"/>
</dbReference>
<dbReference type="InterPro" id="IPR005839">
    <property type="entry name" value="Methylthiotransferase"/>
</dbReference>
<dbReference type="InterPro" id="IPR020612">
    <property type="entry name" value="Methylthiotransferase_CS"/>
</dbReference>
<dbReference type="InterPro" id="IPR013848">
    <property type="entry name" value="Methylthiotransferase_N"/>
</dbReference>
<dbReference type="InterPro" id="IPR038135">
    <property type="entry name" value="Methylthiotransferase_N_sf"/>
</dbReference>
<dbReference type="InterPro" id="IPR006463">
    <property type="entry name" value="MiaB_methiolase"/>
</dbReference>
<dbReference type="InterPro" id="IPR007197">
    <property type="entry name" value="rSAM"/>
</dbReference>
<dbReference type="InterPro" id="IPR023404">
    <property type="entry name" value="rSAM_horseshoe"/>
</dbReference>
<dbReference type="InterPro" id="IPR002792">
    <property type="entry name" value="TRAM_dom"/>
</dbReference>
<dbReference type="NCBIfam" id="TIGR01574">
    <property type="entry name" value="miaB-methiolase"/>
    <property type="match status" value="1"/>
</dbReference>
<dbReference type="NCBIfam" id="TIGR00089">
    <property type="entry name" value="MiaB/RimO family radical SAM methylthiotransferase"/>
    <property type="match status" value="1"/>
</dbReference>
<dbReference type="PANTHER" id="PTHR43020">
    <property type="entry name" value="CDK5 REGULATORY SUBUNIT-ASSOCIATED PROTEIN 1"/>
    <property type="match status" value="1"/>
</dbReference>
<dbReference type="PANTHER" id="PTHR43020:SF2">
    <property type="entry name" value="MITOCHONDRIAL TRNA METHYLTHIOTRANSFERASE CDK5RAP1"/>
    <property type="match status" value="1"/>
</dbReference>
<dbReference type="Pfam" id="PF04055">
    <property type="entry name" value="Radical_SAM"/>
    <property type="match status" value="1"/>
</dbReference>
<dbReference type="Pfam" id="PF01938">
    <property type="entry name" value="TRAM"/>
    <property type="match status" value="1"/>
</dbReference>
<dbReference type="Pfam" id="PF00919">
    <property type="entry name" value="UPF0004"/>
    <property type="match status" value="1"/>
</dbReference>
<dbReference type="SFLD" id="SFLDF00273">
    <property type="entry name" value="(dimethylallyl)adenosine_tRNA"/>
    <property type="match status" value="1"/>
</dbReference>
<dbReference type="SFLD" id="SFLDG01082">
    <property type="entry name" value="B12-binding_domain_containing"/>
    <property type="match status" value="1"/>
</dbReference>
<dbReference type="SFLD" id="SFLDG01061">
    <property type="entry name" value="methylthiotransferase"/>
    <property type="match status" value="1"/>
</dbReference>
<dbReference type="SMART" id="SM00729">
    <property type="entry name" value="Elp3"/>
    <property type="match status" value="1"/>
</dbReference>
<dbReference type="SUPFAM" id="SSF102114">
    <property type="entry name" value="Radical SAM enzymes"/>
    <property type="match status" value="1"/>
</dbReference>
<dbReference type="PROSITE" id="PS51449">
    <property type="entry name" value="MTTASE_N"/>
    <property type="match status" value="1"/>
</dbReference>
<dbReference type="PROSITE" id="PS01278">
    <property type="entry name" value="MTTASE_RADICAL"/>
    <property type="match status" value="1"/>
</dbReference>
<dbReference type="PROSITE" id="PS51918">
    <property type="entry name" value="RADICAL_SAM"/>
    <property type="match status" value="1"/>
</dbReference>
<dbReference type="PROSITE" id="PS50926">
    <property type="entry name" value="TRAM"/>
    <property type="match status" value="1"/>
</dbReference>
<organism>
    <name type="scientific">Serratia proteamaculans (strain 568)</name>
    <dbReference type="NCBI Taxonomy" id="399741"/>
    <lineage>
        <taxon>Bacteria</taxon>
        <taxon>Pseudomonadati</taxon>
        <taxon>Pseudomonadota</taxon>
        <taxon>Gammaproteobacteria</taxon>
        <taxon>Enterobacterales</taxon>
        <taxon>Yersiniaceae</taxon>
        <taxon>Serratia</taxon>
    </lineage>
</organism>
<accession>A8GB34</accession>
<evidence type="ECO:0000255" key="1">
    <source>
        <dbReference type="HAMAP-Rule" id="MF_01864"/>
    </source>
</evidence>
<evidence type="ECO:0000255" key="2">
    <source>
        <dbReference type="PROSITE-ProRule" id="PRU01266"/>
    </source>
</evidence>
<sequence>MTKKLHIKTWGCQMNEYDSSKMADLLGSTHGYQWTDNAEEADVLLLNTCSIREKAQEKVFAMLGRWRLLKEKNPALIIGVGGCVASQEGEHIRSRAPCVDVVFGPQTLHRLPEMLNHVQGTRSPIVDISFPEIEKFDRLPEPRAEGPTAFVSIMEGCNKYCTFCVVPYTRGEEVSRPSDDVLFEVAQLAAQGVREVNLLGQNVNAYRGATYDGGICSFAELLRLVAAIDGIDRIRYTTSHPIEFTDDIIAVYEDTPELVSFLHLPVQSGSDRILTMMKRAHTALEYKAIIRKLRKARPDIQLSSDFIIGFPGETQADFEQTMNLIAEINFDTSFSFIYSSRPGTPAADMVDDVSEDEKKQRLYILQDRINQQVLQFSRRMLGTVQRILVEGTSRKSVMELAGRTACNRMVNFEGTPDMIGQFVDVEITEVLTNSLRGTVVRTEQQMDLRVHESPQSVIARTRKENALGVGIYQP</sequence>
<name>MIAB_SERP5</name>
<comment type="function">
    <text evidence="1">Catalyzes the methylthiolation of N6-(dimethylallyl)adenosine (i(6)A), leading to the formation of 2-methylthio-N6-(dimethylallyl)adenosine (ms(2)i(6)A) at position 37 in tRNAs that read codons beginning with uridine.</text>
</comment>
<comment type="catalytic activity">
    <reaction evidence="1">
        <text>N(6)-dimethylallyladenosine(37) in tRNA + (sulfur carrier)-SH + AH2 + 2 S-adenosyl-L-methionine = 2-methylsulfanyl-N(6)-dimethylallyladenosine(37) in tRNA + (sulfur carrier)-H + 5'-deoxyadenosine + L-methionine + A + S-adenosyl-L-homocysteine + 2 H(+)</text>
        <dbReference type="Rhea" id="RHEA:37067"/>
        <dbReference type="Rhea" id="RHEA-COMP:10375"/>
        <dbReference type="Rhea" id="RHEA-COMP:10376"/>
        <dbReference type="Rhea" id="RHEA-COMP:14737"/>
        <dbReference type="Rhea" id="RHEA-COMP:14739"/>
        <dbReference type="ChEBI" id="CHEBI:13193"/>
        <dbReference type="ChEBI" id="CHEBI:15378"/>
        <dbReference type="ChEBI" id="CHEBI:17319"/>
        <dbReference type="ChEBI" id="CHEBI:17499"/>
        <dbReference type="ChEBI" id="CHEBI:29917"/>
        <dbReference type="ChEBI" id="CHEBI:57844"/>
        <dbReference type="ChEBI" id="CHEBI:57856"/>
        <dbReference type="ChEBI" id="CHEBI:59789"/>
        <dbReference type="ChEBI" id="CHEBI:64428"/>
        <dbReference type="ChEBI" id="CHEBI:74415"/>
        <dbReference type="ChEBI" id="CHEBI:74417"/>
        <dbReference type="EC" id="2.8.4.3"/>
    </reaction>
</comment>
<comment type="cofactor">
    <cofactor evidence="1">
        <name>[4Fe-4S] cluster</name>
        <dbReference type="ChEBI" id="CHEBI:49883"/>
    </cofactor>
    <text evidence="1">Binds 2 [4Fe-4S] clusters. One cluster is coordinated with 3 cysteines and an exchangeable S-adenosyl-L-methionine.</text>
</comment>
<comment type="subunit">
    <text evidence="1">Monomer.</text>
</comment>
<comment type="subcellular location">
    <subcellularLocation>
        <location evidence="1">Cytoplasm</location>
    </subcellularLocation>
</comment>
<comment type="similarity">
    <text evidence="1">Belongs to the methylthiotransferase family. MiaB subfamily.</text>
</comment>
<protein>
    <recommendedName>
        <fullName evidence="1">tRNA-2-methylthio-N(6)-dimethylallyladenosine synthase</fullName>
        <ecNumber evidence="1">2.8.4.3</ecNumber>
    </recommendedName>
    <alternativeName>
        <fullName evidence="1">(Dimethylallyl)adenosine tRNA methylthiotransferase MiaB</fullName>
    </alternativeName>
    <alternativeName>
        <fullName evidence="1">tRNA-i(6)A37 methylthiotransferase</fullName>
    </alternativeName>
</protein>
<gene>
    <name evidence="1" type="primary">miaB</name>
    <name type="ordered locus">Spro_1220</name>
</gene>
<feature type="chain" id="PRO_0000374532" description="tRNA-2-methylthio-N(6)-dimethylallyladenosine synthase">
    <location>
        <begin position="1"/>
        <end position="474"/>
    </location>
</feature>
<feature type="domain" description="MTTase N-terminal" evidence="1">
    <location>
        <begin position="3"/>
        <end position="120"/>
    </location>
</feature>
<feature type="domain" description="Radical SAM core" evidence="2">
    <location>
        <begin position="143"/>
        <end position="375"/>
    </location>
</feature>
<feature type="domain" description="TRAM" evidence="1">
    <location>
        <begin position="378"/>
        <end position="441"/>
    </location>
</feature>
<feature type="binding site" evidence="1">
    <location>
        <position position="12"/>
    </location>
    <ligand>
        <name>[4Fe-4S] cluster</name>
        <dbReference type="ChEBI" id="CHEBI:49883"/>
        <label>1</label>
    </ligand>
</feature>
<feature type="binding site" evidence="1">
    <location>
        <position position="49"/>
    </location>
    <ligand>
        <name>[4Fe-4S] cluster</name>
        <dbReference type="ChEBI" id="CHEBI:49883"/>
        <label>1</label>
    </ligand>
</feature>
<feature type="binding site" evidence="1">
    <location>
        <position position="83"/>
    </location>
    <ligand>
        <name>[4Fe-4S] cluster</name>
        <dbReference type="ChEBI" id="CHEBI:49883"/>
        <label>1</label>
    </ligand>
</feature>
<feature type="binding site" evidence="1">
    <location>
        <position position="157"/>
    </location>
    <ligand>
        <name>[4Fe-4S] cluster</name>
        <dbReference type="ChEBI" id="CHEBI:49883"/>
        <label>2</label>
        <note>4Fe-4S-S-AdoMet</note>
    </ligand>
</feature>
<feature type="binding site" evidence="1">
    <location>
        <position position="161"/>
    </location>
    <ligand>
        <name>[4Fe-4S] cluster</name>
        <dbReference type="ChEBI" id="CHEBI:49883"/>
        <label>2</label>
        <note>4Fe-4S-S-AdoMet</note>
    </ligand>
</feature>
<feature type="binding site" evidence="1">
    <location>
        <position position="164"/>
    </location>
    <ligand>
        <name>[4Fe-4S] cluster</name>
        <dbReference type="ChEBI" id="CHEBI:49883"/>
        <label>2</label>
        <note>4Fe-4S-S-AdoMet</note>
    </ligand>
</feature>
<proteinExistence type="inferred from homology"/>
<keyword id="KW-0004">4Fe-4S</keyword>
<keyword id="KW-0963">Cytoplasm</keyword>
<keyword id="KW-0408">Iron</keyword>
<keyword id="KW-0411">Iron-sulfur</keyword>
<keyword id="KW-0479">Metal-binding</keyword>
<keyword id="KW-0949">S-adenosyl-L-methionine</keyword>
<keyword id="KW-0808">Transferase</keyword>
<keyword id="KW-0819">tRNA processing</keyword>
<reference key="1">
    <citation type="submission" date="2007-09" db="EMBL/GenBank/DDBJ databases">
        <title>Complete sequence of chromosome of Serratia proteamaculans 568.</title>
        <authorList>
            <consortium name="US DOE Joint Genome Institute"/>
            <person name="Copeland A."/>
            <person name="Lucas S."/>
            <person name="Lapidus A."/>
            <person name="Barry K."/>
            <person name="Glavina del Rio T."/>
            <person name="Dalin E."/>
            <person name="Tice H."/>
            <person name="Pitluck S."/>
            <person name="Chain P."/>
            <person name="Malfatti S."/>
            <person name="Shin M."/>
            <person name="Vergez L."/>
            <person name="Schmutz J."/>
            <person name="Larimer F."/>
            <person name="Land M."/>
            <person name="Hauser L."/>
            <person name="Kyrpides N."/>
            <person name="Kim E."/>
            <person name="Taghavi S."/>
            <person name="Newman L."/>
            <person name="Vangronsveld J."/>
            <person name="van der Lelie D."/>
            <person name="Richardson P."/>
        </authorList>
    </citation>
    <scope>NUCLEOTIDE SEQUENCE [LARGE SCALE GENOMIC DNA]</scope>
    <source>
        <strain>568</strain>
    </source>
</reference>